<name>BACE_BACAM</name>
<feature type="chain" id="PRO_0000084833" description="Putative bacilysin exporter BacE">
    <location>
        <begin position="1"/>
        <end position="393"/>
    </location>
</feature>
<feature type="transmembrane region" description="Helical" evidence="2">
    <location>
        <begin position="11"/>
        <end position="31"/>
    </location>
</feature>
<feature type="transmembrane region" description="Helical" evidence="2">
    <location>
        <begin position="43"/>
        <end position="63"/>
    </location>
</feature>
<feature type="transmembrane region" description="Helical" evidence="2">
    <location>
        <begin position="69"/>
        <end position="89"/>
    </location>
</feature>
<feature type="transmembrane region" description="Helical" evidence="2">
    <location>
        <begin position="92"/>
        <end position="112"/>
    </location>
</feature>
<feature type="transmembrane region" description="Helical" evidence="2">
    <location>
        <begin position="133"/>
        <end position="155"/>
    </location>
</feature>
<feature type="transmembrane region" description="Helical" evidence="2">
    <location>
        <begin position="160"/>
        <end position="177"/>
    </location>
</feature>
<feature type="transmembrane region" description="Helical" evidence="2">
    <location>
        <begin position="215"/>
        <end position="235"/>
    </location>
</feature>
<feature type="transmembrane region" description="Helical" evidence="2">
    <location>
        <begin position="244"/>
        <end position="264"/>
    </location>
</feature>
<feature type="transmembrane region" description="Helical" evidence="2">
    <location>
        <begin position="287"/>
        <end position="307"/>
    </location>
</feature>
<feature type="transmembrane region" description="Helical" evidence="2">
    <location>
        <begin position="353"/>
        <end position="373"/>
    </location>
</feature>
<dbReference type="EMBL" id="AF396779">
    <property type="protein sequence ID" value="AAM90577.1"/>
    <property type="molecule type" value="Genomic_DNA"/>
</dbReference>
<dbReference type="SMR" id="Q8KWS7"/>
<dbReference type="STRING" id="692420.BAMF_3603"/>
<dbReference type="eggNOG" id="COG2814">
    <property type="taxonomic scope" value="Bacteria"/>
</dbReference>
<dbReference type="GO" id="GO:0005886">
    <property type="term" value="C:plasma membrane"/>
    <property type="evidence" value="ECO:0007669"/>
    <property type="project" value="UniProtKB-SubCell"/>
</dbReference>
<dbReference type="GO" id="GO:0022857">
    <property type="term" value="F:transmembrane transporter activity"/>
    <property type="evidence" value="ECO:0007669"/>
    <property type="project" value="InterPro"/>
</dbReference>
<dbReference type="CDD" id="cd06173">
    <property type="entry name" value="MFS_MefA_like"/>
    <property type="match status" value="1"/>
</dbReference>
<dbReference type="Gene3D" id="1.20.1250.20">
    <property type="entry name" value="MFS general substrate transporter like domains"/>
    <property type="match status" value="1"/>
</dbReference>
<dbReference type="InterPro" id="IPR022324">
    <property type="entry name" value="Bacilysin_exporter_BacE_put"/>
</dbReference>
<dbReference type="InterPro" id="IPR011701">
    <property type="entry name" value="MFS"/>
</dbReference>
<dbReference type="InterPro" id="IPR036259">
    <property type="entry name" value="MFS_trans_sf"/>
</dbReference>
<dbReference type="PANTHER" id="PTHR43266:SF10">
    <property type="entry name" value="BACILYSIN EXPORTER BACE-RELATED"/>
    <property type="match status" value="1"/>
</dbReference>
<dbReference type="PANTHER" id="PTHR43266">
    <property type="entry name" value="MACROLIDE-EFFLUX PROTEIN"/>
    <property type="match status" value="1"/>
</dbReference>
<dbReference type="Pfam" id="PF07690">
    <property type="entry name" value="MFS_1"/>
    <property type="match status" value="1"/>
</dbReference>
<dbReference type="PRINTS" id="PR01988">
    <property type="entry name" value="EXPORTERBACE"/>
</dbReference>
<dbReference type="SUPFAM" id="SSF103473">
    <property type="entry name" value="MFS general substrate transporter"/>
    <property type="match status" value="1"/>
</dbReference>
<organism>
    <name type="scientific">Bacillus amyloliquefaciens</name>
    <name type="common">Bacillus velezensis</name>
    <dbReference type="NCBI Taxonomy" id="1390"/>
    <lineage>
        <taxon>Bacteria</taxon>
        <taxon>Bacillati</taxon>
        <taxon>Bacillota</taxon>
        <taxon>Bacilli</taxon>
        <taxon>Bacillales</taxon>
        <taxon>Bacillaceae</taxon>
        <taxon>Bacillus</taxon>
        <taxon>Bacillus amyloliquefaciens group</taxon>
    </lineage>
</organism>
<evidence type="ECO:0000250" key="1"/>
<evidence type="ECO:0000255" key="2"/>
<evidence type="ECO:0000305" key="3"/>
<sequence length="393" mass="43191">MKQLKPNSKYLLFGQALSFMGDYCVLPALLILSTYYHDYWVTSGVIAVRSIPMVFQPFLGVLVDRLDRVKIMLWTDVIRGVIFLGLTFLPKGEYPLLFLALLFVSYGSGVFFNPARLAVMSSLEADIKNINTLFAKATTISIIVGAAAGGLFLLGGSVELAVAFNGVTYLVSAFFISRIKLQYVPIQSENVREAFQSFKEGLKEIKTNAFVLNAMFTMITMALLWGVVYSYFPIVSRFLGDGEIGNFLLTFCIGFGGFIGAALVSKWGFNNNKGLMYFTVLSIVSLALFLFTPIFAVSVIAAILFFIAMEYGEVLAKVKVQENAANQIQGRIFSVAEASIGLCIAVGSMLINIVDAAVIMAFIVLLVSGLFLHTKLVNKSFSERNNESEQIHL</sequence>
<proteinExistence type="inferred from homology"/>
<gene>
    <name type="primary">bacE</name>
</gene>
<comment type="function">
    <text evidence="1">Part of the bacilysin biosynthesis operon. May be involved in self-resistance to bacilysin by permitting efflux of this antibiotic (By similarity).</text>
</comment>
<comment type="subcellular location">
    <subcellularLocation>
        <location evidence="3">Cell membrane</location>
        <topology evidence="3">Multi-pass membrane protein</topology>
    </subcellularLocation>
</comment>
<comment type="similarity">
    <text evidence="3">Belongs to the major facilitator superfamily.</text>
</comment>
<reference key="1">
    <citation type="journal article" date="2005" name="Arch. Microbiol.">
        <title>bac genes for recombinant bacilysin and anticapsin production in Bacillus host strains.</title>
        <authorList>
            <person name="Steinborn G."/>
            <person name="Hajirezaei M.-R."/>
            <person name="Hofemeister J."/>
        </authorList>
    </citation>
    <scope>NUCLEOTIDE SEQUENCE [GENOMIC DNA]</scope>
    <source>
        <strain>ATCC 15841</strain>
    </source>
</reference>
<accession>Q8KWS7</accession>
<protein>
    <recommendedName>
        <fullName>Putative bacilysin exporter BacE</fullName>
    </recommendedName>
</protein>
<keyword id="KW-1003">Cell membrane</keyword>
<keyword id="KW-0472">Membrane</keyword>
<keyword id="KW-0812">Transmembrane</keyword>
<keyword id="KW-1133">Transmembrane helix</keyword>
<keyword id="KW-0813">Transport</keyword>